<feature type="chain" id="PRO_0000325436" description="Anthranilate phosphoribosyltransferase">
    <location>
        <begin position="1"/>
        <end position="339"/>
    </location>
</feature>
<feature type="binding site" evidence="1">
    <location>
        <position position="80"/>
    </location>
    <ligand>
        <name>5-phospho-alpha-D-ribose 1-diphosphate</name>
        <dbReference type="ChEBI" id="CHEBI:58017"/>
    </ligand>
</feature>
<feature type="binding site" evidence="1">
    <location>
        <position position="80"/>
    </location>
    <ligand>
        <name>anthranilate</name>
        <dbReference type="ChEBI" id="CHEBI:16567"/>
        <label>1</label>
    </ligand>
</feature>
<feature type="binding site" evidence="1">
    <location>
        <begin position="83"/>
        <end position="84"/>
    </location>
    <ligand>
        <name>5-phospho-alpha-D-ribose 1-diphosphate</name>
        <dbReference type="ChEBI" id="CHEBI:58017"/>
    </ligand>
</feature>
<feature type="binding site" evidence="1">
    <location>
        <position position="88"/>
    </location>
    <ligand>
        <name>5-phospho-alpha-D-ribose 1-diphosphate</name>
        <dbReference type="ChEBI" id="CHEBI:58017"/>
    </ligand>
</feature>
<feature type="binding site" evidence="1">
    <location>
        <begin position="90"/>
        <end position="93"/>
    </location>
    <ligand>
        <name>5-phospho-alpha-D-ribose 1-diphosphate</name>
        <dbReference type="ChEBI" id="CHEBI:58017"/>
    </ligand>
</feature>
<feature type="binding site" evidence="1">
    <location>
        <position position="92"/>
    </location>
    <ligand>
        <name>Mg(2+)</name>
        <dbReference type="ChEBI" id="CHEBI:18420"/>
        <label>1</label>
    </ligand>
</feature>
<feature type="binding site" evidence="1">
    <location>
        <begin position="108"/>
        <end position="116"/>
    </location>
    <ligand>
        <name>5-phospho-alpha-D-ribose 1-diphosphate</name>
        <dbReference type="ChEBI" id="CHEBI:58017"/>
    </ligand>
</feature>
<feature type="binding site" evidence="1">
    <location>
        <position position="111"/>
    </location>
    <ligand>
        <name>anthranilate</name>
        <dbReference type="ChEBI" id="CHEBI:16567"/>
        <label>1</label>
    </ligand>
</feature>
<feature type="binding site" evidence="1">
    <location>
        <position position="120"/>
    </location>
    <ligand>
        <name>5-phospho-alpha-D-ribose 1-diphosphate</name>
        <dbReference type="ChEBI" id="CHEBI:58017"/>
    </ligand>
</feature>
<feature type="binding site" evidence="1">
    <location>
        <position position="166"/>
    </location>
    <ligand>
        <name>anthranilate</name>
        <dbReference type="ChEBI" id="CHEBI:16567"/>
        <label>2</label>
    </ligand>
</feature>
<feature type="binding site" evidence="1">
    <location>
        <position position="225"/>
    </location>
    <ligand>
        <name>Mg(2+)</name>
        <dbReference type="ChEBI" id="CHEBI:18420"/>
        <label>2</label>
    </ligand>
</feature>
<feature type="binding site" evidence="1">
    <location>
        <position position="226"/>
    </location>
    <ligand>
        <name>Mg(2+)</name>
        <dbReference type="ChEBI" id="CHEBI:18420"/>
        <label>1</label>
    </ligand>
</feature>
<feature type="binding site" evidence="1">
    <location>
        <position position="226"/>
    </location>
    <ligand>
        <name>Mg(2+)</name>
        <dbReference type="ChEBI" id="CHEBI:18420"/>
        <label>2</label>
    </ligand>
</feature>
<proteinExistence type="inferred from homology"/>
<reference key="1">
    <citation type="journal article" date="2008" name="Environ. Microbiol.">
        <title>The complete genome sequence of Moorella thermoacetica (f. Clostridium thermoaceticum).</title>
        <authorList>
            <person name="Pierce E."/>
            <person name="Xie G."/>
            <person name="Barabote R.D."/>
            <person name="Saunders E."/>
            <person name="Han C.S."/>
            <person name="Detter J.C."/>
            <person name="Richardson P."/>
            <person name="Brettin T.S."/>
            <person name="Das A."/>
            <person name="Ljungdahl L.G."/>
            <person name="Ragsdale S.W."/>
        </authorList>
    </citation>
    <scope>NUCLEOTIDE SEQUENCE [LARGE SCALE GENOMIC DNA]</scope>
    <source>
        <strain>ATCC 39073 / JCM 9320</strain>
    </source>
</reference>
<organism>
    <name type="scientific">Moorella thermoacetica (strain ATCC 39073 / JCM 9320)</name>
    <dbReference type="NCBI Taxonomy" id="264732"/>
    <lineage>
        <taxon>Bacteria</taxon>
        <taxon>Bacillati</taxon>
        <taxon>Bacillota</taxon>
        <taxon>Clostridia</taxon>
        <taxon>Moorellales</taxon>
        <taxon>Moorellaceae</taxon>
        <taxon>Moorella</taxon>
    </lineage>
</organism>
<evidence type="ECO:0000255" key="1">
    <source>
        <dbReference type="HAMAP-Rule" id="MF_00211"/>
    </source>
</evidence>
<keyword id="KW-0028">Amino-acid biosynthesis</keyword>
<keyword id="KW-0057">Aromatic amino acid biosynthesis</keyword>
<keyword id="KW-0328">Glycosyltransferase</keyword>
<keyword id="KW-0460">Magnesium</keyword>
<keyword id="KW-0479">Metal-binding</keyword>
<keyword id="KW-0808">Transferase</keyword>
<keyword id="KW-0822">Tryptophan biosynthesis</keyword>
<gene>
    <name evidence="1" type="primary">trpD</name>
    <name type="ordered locus">Moth_1340</name>
</gene>
<protein>
    <recommendedName>
        <fullName evidence="1">Anthranilate phosphoribosyltransferase</fullName>
        <ecNumber evidence="1">2.4.2.18</ecNumber>
    </recommendedName>
</protein>
<dbReference type="EC" id="2.4.2.18" evidence="1"/>
<dbReference type="EMBL" id="CP000232">
    <property type="protein sequence ID" value="ABC19653.1"/>
    <property type="molecule type" value="Genomic_DNA"/>
</dbReference>
<dbReference type="RefSeq" id="YP_430196.1">
    <property type="nucleotide sequence ID" value="NC_007644.1"/>
</dbReference>
<dbReference type="SMR" id="Q2RIT6"/>
<dbReference type="STRING" id="264732.Moth_1340"/>
<dbReference type="EnsemblBacteria" id="ABC19653">
    <property type="protein sequence ID" value="ABC19653"/>
    <property type="gene ID" value="Moth_1340"/>
</dbReference>
<dbReference type="KEGG" id="mta:Moth_1340"/>
<dbReference type="PATRIC" id="fig|264732.11.peg.1438"/>
<dbReference type="eggNOG" id="COG0547">
    <property type="taxonomic scope" value="Bacteria"/>
</dbReference>
<dbReference type="HOGENOM" id="CLU_034315_2_1_9"/>
<dbReference type="OrthoDB" id="9806430at2"/>
<dbReference type="UniPathway" id="UPA00035">
    <property type="reaction ID" value="UER00041"/>
</dbReference>
<dbReference type="GO" id="GO:0005829">
    <property type="term" value="C:cytosol"/>
    <property type="evidence" value="ECO:0007669"/>
    <property type="project" value="TreeGrafter"/>
</dbReference>
<dbReference type="GO" id="GO:0004048">
    <property type="term" value="F:anthranilate phosphoribosyltransferase activity"/>
    <property type="evidence" value="ECO:0007669"/>
    <property type="project" value="UniProtKB-UniRule"/>
</dbReference>
<dbReference type="GO" id="GO:0000287">
    <property type="term" value="F:magnesium ion binding"/>
    <property type="evidence" value="ECO:0007669"/>
    <property type="project" value="UniProtKB-UniRule"/>
</dbReference>
<dbReference type="GO" id="GO:0000162">
    <property type="term" value="P:L-tryptophan biosynthetic process"/>
    <property type="evidence" value="ECO:0007669"/>
    <property type="project" value="UniProtKB-UniRule"/>
</dbReference>
<dbReference type="FunFam" id="3.40.1030.10:FF:000002">
    <property type="entry name" value="Anthranilate phosphoribosyltransferase"/>
    <property type="match status" value="1"/>
</dbReference>
<dbReference type="Gene3D" id="3.40.1030.10">
    <property type="entry name" value="Nucleoside phosphorylase/phosphoribosyltransferase catalytic domain"/>
    <property type="match status" value="1"/>
</dbReference>
<dbReference type="Gene3D" id="1.20.970.10">
    <property type="entry name" value="Transferase, Pyrimidine Nucleoside Phosphorylase, Chain C"/>
    <property type="match status" value="1"/>
</dbReference>
<dbReference type="HAMAP" id="MF_00211">
    <property type="entry name" value="TrpD"/>
    <property type="match status" value="1"/>
</dbReference>
<dbReference type="InterPro" id="IPR005940">
    <property type="entry name" value="Anthranilate_Pribosyl_Tfrase"/>
</dbReference>
<dbReference type="InterPro" id="IPR000312">
    <property type="entry name" value="Glycosyl_Trfase_fam3"/>
</dbReference>
<dbReference type="InterPro" id="IPR017459">
    <property type="entry name" value="Glycosyl_Trfase_fam3_N_dom"/>
</dbReference>
<dbReference type="InterPro" id="IPR036320">
    <property type="entry name" value="Glycosyl_Trfase_fam3_N_dom_sf"/>
</dbReference>
<dbReference type="InterPro" id="IPR035902">
    <property type="entry name" value="Nuc_phospho_transferase"/>
</dbReference>
<dbReference type="NCBIfam" id="TIGR01245">
    <property type="entry name" value="trpD"/>
    <property type="match status" value="1"/>
</dbReference>
<dbReference type="PANTHER" id="PTHR43285">
    <property type="entry name" value="ANTHRANILATE PHOSPHORIBOSYLTRANSFERASE"/>
    <property type="match status" value="1"/>
</dbReference>
<dbReference type="PANTHER" id="PTHR43285:SF2">
    <property type="entry name" value="ANTHRANILATE PHOSPHORIBOSYLTRANSFERASE"/>
    <property type="match status" value="1"/>
</dbReference>
<dbReference type="Pfam" id="PF02885">
    <property type="entry name" value="Glycos_trans_3N"/>
    <property type="match status" value="1"/>
</dbReference>
<dbReference type="Pfam" id="PF00591">
    <property type="entry name" value="Glycos_transf_3"/>
    <property type="match status" value="1"/>
</dbReference>
<dbReference type="SUPFAM" id="SSF52418">
    <property type="entry name" value="Nucleoside phosphorylase/phosphoribosyltransferase catalytic domain"/>
    <property type="match status" value="1"/>
</dbReference>
<dbReference type="SUPFAM" id="SSF47648">
    <property type="entry name" value="Nucleoside phosphorylase/phosphoribosyltransferase N-terminal domain"/>
    <property type="match status" value="1"/>
</dbReference>
<sequence>MLKAQISKVVAGQHLSEAEAAEAMDIIMAGEATPAQIAAFLTALRLKGEMVDEITGFARSMRRRAIPLTTSHPVFVDTCGTGGDGRQTFNISTTAAFVVAGAGVAVAKHGNRSVSSRCGSADMLEALGIKVDLPPDAVARCLDEVGMAFLFAPVFHGAMKYAAGPRREIGIRTAFNLLGPLTNPAGAPCQLVGVYDPDLTETVAAVLGRLGSRRAYVVHGSDGLDEVTITGPSKITCLDKGAIRTYTFTPEDVGLPRANLADLAGGTATDNAAIARAVLSGTRGPARDVVLINAAFALLAAGAADTLQQALALAESSIDSGAAAAKLQAMVAWVESWAA</sequence>
<name>TRPD_MOOTA</name>
<comment type="function">
    <text evidence="1">Catalyzes the transfer of the phosphoribosyl group of 5-phosphorylribose-1-pyrophosphate (PRPP) to anthranilate to yield N-(5'-phosphoribosyl)-anthranilate (PRA).</text>
</comment>
<comment type="catalytic activity">
    <reaction evidence="1">
        <text>N-(5-phospho-beta-D-ribosyl)anthranilate + diphosphate = 5-phospho-alpha-D-ribose 1-diphosphate + anthranilate</text>
        <dbReference type="Rhea" id="RHEA:11768"/>
        <dbReference type="ChEBI" id="CHEBI:16567"/>
        <dbReference type="ChEBI" id="CHEBI:18277"/>
        <dbReference type="ChEBI" id="CHEBI:33019"/>
        <dbReference type="ChEBI" id="CHEBI:58017"/>
        <dbReference type="EC" id="2.4.2.18"/>
    </reaction>
</comment>
<comment type="cofactor">
    <cofactor evidence="1">
        <name>Mg(2+)</name>
        <dbReference type="ChEBI" id="CHEBI:18420"/>
    </cofactor>
    <text evidence="1">Binds 2 magnesium ions per monomer.</text>
</comment>
<comment type="pathway">
    <text evidence="1">Amino-acid biosynthesis; L-tryptophan biosynthesis; L-tryptophan from chorismate: step 2/5.</text>
</comment>
<comment type="subunit">
    <text evidence="1">Homodimer.</text>
</comment>
<comment type="similarity">
    <text evidence="1">Belongs to the anthranilate phosphoribosyltransferase family.</text>
</comment>
<accession>Q2RIT6</accession>